<dbReference type="EC" id="4.2.3.3" evidence="1"/>
<dbReference type="EMBL" id="CP000857">
    <property type="protein sequence ID" value="ACN46774.1"/>
    <property type="molecule type" value="Genomic_DNA"/>
</dbReference>
<dbReference type="RefSeq" id="WP_000424187.1">
    <property type="nucleotide sequence ID" value="NC_012125.1"/>
</dbReference>
<dbReference type="SMR" id="C0Q8C9"/>
<dbReference type="KEGG" id="sei:SPC_2673"/>
<dbReference type="HOGENOM" id="CLU_120420_0_1_6"/>
<dbReference type="Proteomes" id="UP000001599">
    <property type="component" value="Chromosome"/>
</dbReference>
<dbReference type="GO" id="GO:0005829">
    <property type="term" value="C:cytosol"/>
    <property type="evidence" value="ECO:0007669"/>
    <property type="project" value="TreeGrafter"/>
</dbReference>
<dbReference type="GO" id="GO:0008929">
    <property type="term" value="F:methylglyoxal synthase activity"/>
    <property type="evidence" value="ECO:0007669"/>
    <property type="project" value="UniProtKB-UniRule"/>
</dbReference>
<dbReference type="GO" id="GO:0019242">
    <property type="term" value="P:methylglyoxal biosynthetic process"/>
    <property type="evidence" value="ECO:0007669"/>
    <property type="project" value="UniProtKB-UniRule"/>
</dbReference>
<dbReference type="CDD" id="cd01422">
    <property type="entry name" value="MGS"/>
    <property type="match status" value="1"/>
</dbReference>
<dbReference type="FunFam" id="3.40.50.1380:FF:000002">
    <property type="entry name" value="Methylglyoxal synthase"/>
    <property type="match status" value="1"/>
</dbReference>
<dbReference type="Gene3D" id="3.40.50.1380">
    <property type="entry name" value="Methylglyoxal synthase-like domain"/>
    <property type="match status" value="1"/>
</dbReference>
<dbReference type="HAMAP" id="MF_00549">
    <property type="entry name" value="Methylglyoxal_synth"/>
    <property type="match status" value="1"/>
</dbReference>
<dbReference type="InterPro" id="IPR004363">
    <property type="entry name" value="Methylgl_synth"/>
</dbReference>
<dbReference type="InterPro" id="IPR018148">
    <property type="entry name" value="Methylglyoxal_synth_AS"/>
</dbReference>
<dbReference type="InterPro" id="IPR011607">
    <property type="entry name" value="MGS-like_dom"/>
</dbReference>
<dbReference type="InterPro" id="IPR036914">
    <property type="entry name" value="MGS-like_dom_sf"/>
</dbReference>
<dbReference type="NCBIfam" id="TIGR00160">
    <property type="entry name" value="MGSA"/>
    <property type="match status" value="1"/>
</dbReference>
<dbReference type="NCBIfam" id="NF003559">
    <property type="entry name" value="PRK05234.1"/>
    <property type="match status" value="1"/>
</dbReference>
<dbReference type="PANTHER" id="PTHR30492">
    <property type="entry name" value="METHYLGLYOXAL SYNTHASE"/>
    <property type="match status" value="1"/>
</dbReference>
<dbReference type="PANTHER" id="PTHR30492:SF0">
    <property type="entry name" value="METHYLGLYOXAL SYNTHASE"/>
    <property type="match status" value="1"/>
</dbReference>
<dbReference type="Pfam" id="PF02142">
    <property type="entry name" value="MGS"/>
    <property type="match status" value="1"/>
</dbReference>
<dbReference type="PIRSF" id="PIRSF006614">
    <property type="entry name" value="Methylglyox_syn"/>
    <property type="match status" value="1"/>
</dbReference>
<dbReference type="SMART" id="SM00851">
    <property type="entry name" value="MGS"/>
    <property type="match status" value="1"/>
</dbReference>
<dbReference type="SUPFAM" id="SSF52335">
    <property type="entry name" value="Methylglyoxal synthase-like"/>
    <property type="match status" value="1"/>
</dbReference>
<dbReference type="PROSITE" id="PS01335">
    <property type="entry name" value="METHYLGLYOXAL_SYNTH"/>
    <property type="match status" value="1"/>
</dbReference>
<dbReference type="PROSITE" id="PS51855">
    <property type="entry name" value="MGS"/>
    <property type="match status" value="1"/>
</dbReference>
<protein>
    <recommendedName>
        <fullName evidence="1">Methylglyoxal synthase</fullName>
        <shortName evidence="1">MGS</shortName>
        <ecNumber evidence="1">4.2.3.3</ecNumber>
    </recommendedName>
</protein>
<proteinExistence type="inferred from homology"/>
<accession>C0Q8C9</accession>
<keyword id="KW-0456">Lyase</keyword>
<sequence>MELTTRTLPTRKHIALVAHDHCKQMLMNWVERHQPLLEKHVLYATGTTGNLIQRATGMDVNAMLSGPMGGDQQVGALISEGKIDVLIFFWDPLNAVPHDPDVKALLRLATVWNIPVATNVSTADFIIQSPHFNDAVDILIPDYARYLAERLK</sequence>
<evidence type="ECO:0000255" key="1">
    <source>
        <dbReference type="HAMAP-Rule" id="MF_00549"/>
    </source>
</evidence>
<feature type="chain" id="PRO_1000146630" description="Methylglyoxal synthase">
    <location>
        <begin position="1"/>
        <end position="152"/>
    </location>
</feature>
<feature type="domain" description="MGS-like" evidence="1">
    <location>
        <begin position="6"/>
        <end position="152"/>
    </location>
</feature>
<feature type="active site" description="Proton donor/acceptor" evidence="1">
    <location>
        <position position="71"/>
    </location>
</feature>
<feature type="binding site" evidence="1">
    <location>
        <position position="19"/>
    </location>
    <ligand>
        <name>substrate</name>
    </ligand>
</feature>
<feature type="binding site" evidence="1">
    <location>
        <position position="23"/>
    </location>
    <ligand>
        <name>substrate</name>
    </ligand>
</feature>
<feature type="binding site" evidence="1">
    <location>
        <begin position="45"/>
        <end position="48"/>
    </location>
    <ligand>
        <name>substrate</name>
    </ligand>
</feature>
<feature type="binding site" evidence="1">
    <location>
        <begin position="65"/>
        <end position="66"/>
    </location>
    <ligand>
        <name>substrate</name>
    </ligand>
</feature>
<feature type="binding site" evidence="1">
    <location>
        <position position="98"/>
    </location>
    <ligand>
        <name>substrate</name>
    </ligand>
</feature>
<gene>
    <name evidence="1" type="primary">mgsA</name>
    <name type="ordered locus">SPC_2673</name>
</gene>
<organism>
    <name type="scientific">Salmonella paratyphi C (strain RKS4594)</name>
    <dbReference type="NCBI Taxonomy" id="476213"/>
    <lineage>
        <taxon>Bacteria</taxon>
        <taxon>Pseudomonadati</taxon>
        <taxon>Pseudomonadota</taxon>
        <taxon>Gammaproteobacteria</taxon>
        <taxon>Enterobacterales</taxon>
        <taxon>Enterobacteriaceae</taxon>
        <taxon>Salmonella</taxon>
    </lineage>
</organism>
<comment type="function">
    <text evidence="1">Catalyzes the formation of methylglyoxal from dihydroxyacetone phosphate.</text>
</comment>
<comment type="catalytic activity">
    <reaction evidence="1">
        <text>dihydroxyacetone phosphate = methylglyoxal + phosphate</text>
        <dbReference type="Rhea" id="RHEA:17937"/>
        <dbReference type="ChEBI" id="CHEBI:17158"/>
        <dbReference type="ChEBI" id="CHEBI:43474"/>
        <dbReference type="ChEBI" id="CHEBI:57642"/>
        <dbReference type="EC" id="4.2.3.3"/>
    </reaction>
</comment>
<comment type="similarity">
    <text evidence="1">Belongs to the methylglyoxal synthase family.</text>
</comment>
<reference key="1">
    <citation type="journal article" date="2009" name="PLoS ONE">
        <title>Salmonella paratyphi C: genetic divergence from Salmonella choleraesuis and pathogenic convergence with Salmonella typhi.</title>
        <authorList>
            <person name="Liu W.-Q."/>
            <person name="Feng Y."/>
            <person name="Wang Y."/>
            <person name="Zou Q.-H."/>
            <person name="Chen F."/>
            <person name="Guo J.-T."/>
            <person name="Peng Y.-H."/>
            <person name="Jin Y."/>
            <person name="Li Y.-G."/>
            <person name="Hu S.-N."/>
            <person name="Johnston R.N."/>
            <person name="Liu G.-R."/>
            <person name="Liu S.-L."/>
        </authorList>
    </citation>
    <scope>NUCLEOTIDE SEQUENCE [LARGE SCALE GENOMIC DNA]</scope>
    <source>
        <strain>RKS4594</strain>
    </source>
</reference>
<name>MGSA_SALPC</name>